<protein>
    <recommendedName>
        <fullName>Apolipoprotein L3</fullName>
    </recommendedName>
    <alternativeName>
        <fullName>Apolipoprotein L-III</fullName>
        <shortName>ApoL-III</shortName>
    </alternativeName>
    <alternativeName>
        <fullName>TNF-inducible protein CG12-1</fullName>
        <shortName>CG12_1</shortName>
    </alternativeName>
</protein>
<gene>
    <name type="primary">APOL3</name>
</gene>
<accession>O95236</accession>
<accession>B1AHI4</accession>
<accession>B1AHI5</accession>
<accession>Q5U5N4</accession>
<accession>Q9BQ82</accession>
<accession>Q9BQA3</accession>
<evidence type="ECO:0000269" key="1">
    <source>
    </source>
</evidence>
<evidence type="ECO:0000303" key="2">
    <source>
    </source>
</evidence>
<evidence type="ECO:0000303" key="3">
    <source>
    </source>
</evidence>
<evidence type="ECO:0000303" key="4">
    <source>
    </source>
</evidence>
<evidence type="ECO:0000303" key="5">
    <source>
    </source>
</evidence>
<evidence type="ECO:0000303" key="6">
    <source>
    </source>
</evidence>
<evidence type="ECO:0000305" key="7"/>
<reference key="1">
    <citation type="journal article" date="1999" name="Blood">
        <title>Vascular endothelial genes that are responsive to tumor necrosis factor-alpha in vitro are expressed in atherosclerotic lesions, including inhibitor of apoptosis protein-1, stannin, and two novel genes.</title>
        <authorList>
            <person name="Horrevoets A.J.G."/>
            <person name="Fontijn R.D."/>
            <person name="van Zonneveld A.J."/>
            <person name="de Vries C.J.M."/>
            <person name="ten Cate J.W."/>
            <person name="Pannekoek H."/>
        </authorList>
    </citation>
    <scope>NUCLEOTIDE SEQUENCE [MRNA] (ISOFORM 2)</scope>
    <source>
        <tissue>Endothelial cell</tissue>
    </source>
</reference>
<reference key="2">
    <citation type="journal article" date="2001" name="J. Lipid Res.">
        <title>Apolipoprotein L gene family: tissue-specific expression, splicing, promoter regions; discovery of a new gene.</title>
        <authorList>
            <person name="Duchateau P.N."/>
            <person name="Pullinger C.R."/>
            <person name="Cho M.H."/>
            <person name="Eng C."/>
            <person name="Kane J.P."/>
        </authorList>
    </citation>
    <scope>NUCLEOTIDE SEQUENCE [GENOMIC DNA / MRNA] (ISOFORMS 1; 2 AND 3)</scope>
    <scope>VARIANT ARG-39</scope>
    <source>
        <tissue>Pancreas</tissue>
    </source>
</reference>
<reference key="3">
    <citation type="journal article" date="2001" name="Genomics">
        <title>The human apolipoprotein L gene cluster: identification, classification, and sites of distribution.</title>
        <authorList>
            <person name="Page N.M."/>
            <person name="Butlin D.J."/>
            <person name="Lomthaisong K."/>
            <person name="Lowry P.J."/>
        </authorList>
    </citation>
    <scope>NUCLEOTIDE SEQUENCE [MRNA] (ISOFORM 2)</scope>
    <source>
        <tissue>Placenta</tissue>
    </source>
</reference>
<reference key="4">
    <citation type="journal article" date="2004" name="Genome Biol.">
        <title>A genome annotation-driven approach to cloning the human ORFeome.</title>
        <authorList>
            <person name="Collins J.E."/>
            <person name="Wright C.L."/>
            <person name="Edwards C.A."/>
            <person name="Davis M.P."/>
            <person name="Grinham J.A."/>
            <person name="Cole C.G."/>
            <person name="Goward M.E."/>
            <person name="Aguado B."/>
            <person name="Mallya M."/>
            <person name="Mokrab Y."/>
            <person name="Huckle E.J."/>
            <person name="Beare D.M."/>
            <person name="Dunham I."/>
        </authorList>
    </citation>
    <scope>NUCLEOTIDE SEQUENCE [LARGE SCALE MRNA] (ISOFORM 2)</scope>
</reference>
<reference key="5">
    <citation type="journal article" date="1999" name="Nature">
        <title>The DNA sequence of human chromosome 22.</title>
        <authorList>
            <person name="Dunham I."/>
            <person name="Hunt A.R."/>
            <person name="Collins J.E."/>
            <person name="Bruskiewich R."/>
            <person name="Beare D.M."/>
            <person name="Clamp M."/>
            <person name="Smink L.J."/>
            <person name="Ainscough R."/>
            <person name="Almeida J.P."/>
            <person name="Babbage A.K."/>
            <person name="Bagguley C."/>
            <person name="Bailey J."/>
            <person name="Barlow K.F."/>
            <person name="Bates K.N."/>
            <person name="Beasley O.P."/>
            <person name="Bird C.P."/>
            <person name="Blakey S.E."/>
            <person name="Bridgeman A.M."/>
            <person name="Buck D."/>
            <person name="Burgess J."/>
            <person name="Burrill W.D."/>
            <person name="Burton J."/>
            <person name="Carder C."/>
            <person name="Carter N.P."/>
            <person name="Chen Y."/>
            <person name="Clark G."/>
            <person name="Clegg S.M."/>
            <person name="Cobley V.E."/>
            <person name="Cole C.G."/>
            <person name="Collier R.E."/>
            <person name="Connor R."/>
            <person name="Conroy D."/>
            <person name="Corby N.R."/>
            <person name="Coville G.J."/>
            <person name="Cox A.V."/>
            <person name="Davis J."/>
            <person name="Dawson E."/>
            <person name="Dhami P.D."/>
            <person name="Dockree C."/>
            <person name="Dodsworth S.J."/>
            <person name="Durbin R.M."/>
            <person name="Ellington A.G."/>
            <person name="Evans K.L."/>
            <person name="Fey J.M."/>
            <person name="Fleming K."/>
            <person name="French L."/>
            <person name="Garner A.A."/>
            <person name="Gilbert J.G.R."/>
            <person name="Goward M.E."/>
            <person name="Grafham D.V."/>
            <person name="Griffiths M.N.D."/>
            <person name="Hall C."/>
            <person name="Hall R.E."/>
            <person name="Hall-Tamlyn G."/>
            <person name="Heathcott R.W."/>
            <person name="Ho S."/>
            <person name="Holmes S."/>
            <person name="Hunt S.E."/>
            <person name="Jones M.C."/>
            <person name="Kershaw J."/>
            <person name="Kimberley A.M."/>
            <person name="King A."/>
            <person name="Laird G.K."/>
            <person name="Langford C.F."/>
            <person name="Leversha M.A."/>
            <person name="Lloyd C."/>
            <person name="Lloyd D.M."/>
            <person name="Martyn I.D."/>
            <person name="Mashreghi-Mohammadi M."/>
            <person name="Matthews L.H."/>
            <person name="Mccann O.T."/>
            <person name="Mcclay J."/>
            <person name="Mclaren S."/>
            <person name="McMurray A.A."/>
            <person name="Milne S.A."/>
            <person name="Mortimore B.J."/>
            <person name="Odell C.N."/>
            <person name="Pavitt R."/>
            <person name="Pearce A.V."/>
            <person name="Pearson D."/>
            <person name="Phillimore B.J.C.T."/>
            <person name="Phillips S.H."/>
            <person name="Plumb R.W."/>
            <person name="Ramsay H."/>
            <person name="Ramsey Y."/>
            <person name="Rogers L."/>
            <person name="Ross M.T."/>
            <person name="Scott C.E."/>
            <person name="Sehra H.K."/>
            <person name="Skuce C.D."/>
            <person name="Smalley S."/>
            <person name="Smith M.L."/>
            <person name="Soderlund C."/>
            <person name="Spragon L."/>
            <person name="Steward C.A."/>
            <person name="Sulston J.E."/>
            <person name="Swann R.M."/>
            <person name="Vaudin M."/>
            <person name="Wall M."/>
            <person name="Wallis J.M."/>
            <person name="Whiteley M.N."/>
            <person name="Willey D.L."/>
            <person name="Williams L."/>
            <person name="Williams S.A."/>
            <person name="Williamson H."/>
            <person name="Wilmer T.E."/>
            <person name="Wilming L."/>
            <person name="Wright C.L."/>
            <person name="Hubbard T."/>
            <person name="Bentley D.R."/>
            <person name="Beck S."/>
            <person name="Rogers J."/>
            <person name="Shimizu N."/>
            <person name="Minoshima S."/>
            <person name="Kawasaki K."/>
            <person name="Sasaki T."/>
            <person name="Asakawa S."/>
            <person name="Kudoh J."/>
            <person name="Shintani A."/>
            <person name="Shibuya K."/>
            <person name="Yoshizaki Y."/>
            <person name="Aoki N."/>
            <person name="Mitsuyama S."/>
            <person name="Roe B.A."/>
            <person name="Chen F."/>
            <person name="Chu L."/>
            <person name="Crabtree J."/>
            <person name="Deschamps S."/>
            <person name="Do A."/>
            <person name="Do T."/>
            <person name="Dorman A."/>
            <person name="Fang F."/>
            <person name="Fu Y."/>
            <person name="Hu P."/>
            <person name="Hua A."/>
            <person name="Kenton S."/>
            <person name="Lai H."/>
            <person name="Lao H.I."/>
            <person name="Lewis J."/>
            <person name="Lewis S."/>
            <person name="Lin S.-P."/>
            <person name="Loh P."/>
            <person name="Malaj E."/>
            <person name="Nguyen T."/>
            <person name="Pan H."/>
            <person name="Phan S."/>
            <person name="Qi S."/>
            <person name="Qian Y."/>
            <person name="Ray L."/>
            <person name="Ren Q."/>
            <person name="Shaull S."/>
            <person name="Sloan D."/>
            <person name="Song L."/>
            <person name="Wang Q."/>
            <person name="Wang Y."/>
            <person name="Wang Z."/>
            <person name="White J."/>
            <person name="Willingham D."/>
            <person name="Wu H."/>
            <person name="Yao Z."/>
            <person name="Zhan M."/>
            <person name="Zhang G."/>
            <person name="Chissoe S."/>
            <person name="Murray J."/>
            <person name="Miller N."/>
            <person name="Minx P."/>
            <person name="Fulton R."/>
            <person name="Johnson D."/>
            <person name="Bemis G."/>
            <person name="Bentley D."/>
            <person name="Bradshaw H."/>
            <person name="Bourne S."/>
            <person name="Cordes M."/>
            <person name="Du Z."/>
            <person name="Fulton L."/>
            <person name="Goela D."/>
            <person name="Graves T."/>
            <person name="Hawkins J."/>
            <person name="Hinds K."/>
            <person name="Kemp K."/>
            <person name="Latreille P."/>
            <person name="Layman D."/>
            <person name="Ozersky P."/>
            <person name="Rohlfing T."/>
            <person name="Scheet P."/>
            <person name="Walker C."/>
            <person name="Wamsley A."/>
            <person name="Wohldmann P."/>
            <person name="Pepin K."/>
            <person name="Nelson J."/>
            <person name="Korf I."/>
            <person name="Bedell J.A."/>
            <person name="Hillier L.W."/>
            <person name="Mardis E."/>
            <person name="Waterston R."/>
            <person name="Wilson R."/>
            <person name="Emanuel B.S."/>
            <person name="Shaikh T."/>
            <person name="Kurahashi H."/>
            <person name="Saitta S."/>
            <person name="Budarf M.L."/>
            <person name="McDermid H.E."/>
            <person name="Johnson A."/>
            <person name="Wong A.C.C."/>
            <person name="Morrow B.E."/>
            <person name="Edelmann L."/>
            <person name="Kim U.J."/>
            <person name="Shizuya H."/>
            <person name="Simon M.I."/>
            <person name="Dumanski J.P."/>
            <person name="Peyrard M."/>
            <person name="Kedra D."/>
            <person name="Seroussi E."/>
            <person name="Fransson I."/>
            <person name="Tapia I."/>
            <person name="Bruder C.E."/>
            <person name="O'Brien K.P."/>
            <person name="Wilkinson P."/>
            <person name="Bodenteich A."/>
            <person name="Hartman K."/>
            <person name="Hu X."/>
            <person name="Khan A.S."/>
            <person name="Lane L."/>
            <person name="Tilahun Y."/>
            <person name="Wright H."/>
        </authorList>
    </citation>
    <scope>NUCLEOTIDE SEQUENCE [LARGE SCALE GENOMIC DNA]</scope>
</reference>
<reference key="6">
    <citation type="submission" date="2005-07" db="EMBL/GenBank/DDBJ databases">
        <authorList>
            <person name="Mural R.J."/>
            <person name="Istrail S."/>
            <person name="Sutton G.G."/>
            <person name="Florea L."/>
            <person name="Halpern A.L."/>
            <person name="Mobarry C.M."/>
            <person name="Lippert R."/>
            <person name="Walenz B."/>
            <person name="Shatkay H."/>
            <person name="Dew I."/>
            <person name="Miller J.R."/>
            <person name="Flanigan M.J."/>
            <person name="Edwards N.J."/>
            <person name="Bolanos R."/>
            <person name="Fasulo D."/>
            <person name="Halldorsson B.V."/>
            <person name="Hannenhalli S."/>
            <person name="Turner R."/>
            <person name="Yooseph S."/>
            <person name="Lu F."/>
            <person name="Nusskern D.R."/>
            <person name="Shue B.C."/>
            <person name="Zheng X.H."/>
            <person name="Zhong F."/>
            <person name="Delcher A.L."/>
            <person name="Huson D.H."/>
            <person name="Kravitz S.A."/>
            <person name="Mouchard L."/>
            <person name="Reinert K."/>
            <person name="Remington K.A."/>
            <person name="Clark A.G."/>
            <person name="Waterman M.S."/>
            <person name="Eichler E.E."/>
            <person name="Adams M.D."/>
            <person name="Hunkapiller M.W."/>
            <person name="Myers E.W."/>
            <person name="Venter J.C."/>
        </authorList>
    </citation>
    <scope>NUCLEOTIDE SEQUENCE [LARGE SCALE GENOMIC DNA]</scope>
</reference>
<reference key="7">
    <citation type="journal article" date="2004" name="Genome Res.">
        <title>The status, quality, and expansion of the NIH full-length cDNA project: the Mammalian Gene Collection (MGC).</title>
        <authorList>
            <consortium name="The MGC Project Team"/>
        </authorList>
    </citation>
    <scope>NUCLEOTIDE SEQUENCE [LARGE SCALE MRNA] (ISOFORM 2)</scope>
    <source>
        <tissue>Blood</tissue>
        <tissue>Testis</tissue>
    </source>
</reference>
<reference key="8">
    <citation type="journal article" date="2014" name="J. Proteomics">
        <title>An enzyme assisted RP-RPLC approach for in-depth analysis of human liver phosphoproteome.</title>
        <authorList>
            <person name="Bian Y."/>
            <person name="Song C."/>
            <person name="Cheng K."/>
            <person name="Dong M."/>
            <person name="Wang F."/>
            <person name="Huang J."/>
            <person name="Sun D."/>
            <person name="Wang L."/>
            <person name="Ye M."/>
            <person name="Zou H."/>
        </authorList>
    </citation>
    <scope>IDENTIFICATION BY MASS SPECTROMETRY [LARGE SCALE ANALYSIS]</scope>
    <source>
        <tissue>Liver</tissue>
    </source>
</reference>
<comment type="function">
    <text>May affect the movement of lipids in the cytoplasm or allow the binding of lipids to organelles.</text>
</comment>
<comment type="interaction">
    <interactant intactId="EBI-11976321">
        <id>O95236-2</id>
    </interactant>
    <interactant intactId="EBI-18535450">
        <id>Q9GZR5</id>
        <label>ELOVL4</label>
    </interactant>
    <organismsDiffer>false</organismsDiffer>
    <experiments>3</experiments>
</comment>
<comment type="interaction">
    <interactant intactId="EBI-11976321">
        <id>O95236-2</id>
    </interactant>
    <interactant intactId="EBI-743099">
        <id>Q969F0</id>
        <label>FATE1</label>
    </interactant>
    <organismsDiffer>false</organismsDiffer>
    <experiments>3</experiments>
</comment>
<comment type="interaction">
    <interactant intactId="EBI-11976321">
        <id>O95236-2</id>
    </interactant>
    <interactant intactId="EBI-17458373">
        <id>P48165</id>
        <label>GJA8</label>
    </interactant>
    <organismsDiffer>false</organismsDiffer>
    <experiments>3</experiments>
</comment>
<comment type="interaction">
    <interactant intactId="EBI-11976321">
        <id>O95236-2</id>
    </interactant>
    <interactant intactId="EBI-17565645">
        <id>P08034</id>
        <label>GJB1</label>
    </interactant>
    <organismsDiffer>false</organismsDiffer>
    <experiments>3</experiments>
</comment>
<comment type="interaction">
    <interactant intactId="EBI-11976321">
        <id>O95236-2</id>
    </interactant>
    <interactant intactId="EBI-3909454">
        <id>O95377</id>
        <label>GJB5</label>
    </interactant>
    <organismsDiffer>false</organismsDiffer>
    <experiments>3</experiments>
</comment>
<comment type="interaction">
    <interactant intactId="EBI-11976321">
        <id>O95236-2</id>
    </interactant>
    <interactant intactId="EBI-11979659">
        <id>P36383</id>
        <label>GJC1</label>
    </interactant>
    <organismsDiffer>false</organismsDiffer>
    <experiments>3</experiments>
</comment>
<comment type="interaction">
    <interactant intactId="EBI-11976321">
        <id>O95236-2</id>
    </interactant>
    <interactant intactId="EBI-13345167">
        <id>Q8TDT2</id>
        <label>GPR152</label>
    </interactant>
    <organismsDiffer>false</organismsDiffer>
    <experiments>3</experiments>
</comment>
<comment type="interaction">
    <interactant intactId="EBI-11976321">
        <id>O95236-2</id>
    </interactant>
    <interactant intactId="EBI-13067820">
        <id>Q9NZD1</id>
        <label>GPRC5D</label>
    </interactant>
    <organismsDiffer>false</organismsDiffer>
    <experiments>3</experiments>
</comment>
<comment type="interaction">
    <interactant intactId="EBI-11976321">
        <id>O95236-2</id>
    </interactant>
    <interactant intactId="EBI-17186025">
        <id>O00219-2</id>
        <label>HAS3</label>
    </interactant>
    <organismsDiffer>false</organismsDiffer>
    <experiments>3</experiments>
</comment>
<comment type="interaction">
    <interactant intactId="EBI-11976321">
        <id>O95236-2</id>
    </interactant>
    <interactant intactId="EBI-80490">
        <id>P16871</id>
        <label>IL7R</label>
    </interactant>
    <organismsDiffer>false</organismsDiffer>
    <experiments>3</experiments>
</comment>
<comment type="interaction">
    <interactant intactId="EBI-11976321">
        <id>O95236-2</id>
    </interactant>
    <interactant intactId="EBI-2820517">
        <id>Q8TAF8</id>
        <label>LHFPL5</label>
    </interactant>
    <organismsDiffer>false</organismsDiffer>
    <experiments>3</experiments>
</comment>
<comment type="interaction">
    <interactant intactId="EBI-11976321">
        <id>O95236-2</id>
    </interactant>
    <interactant intactId="EBI-11304917">
        <id>Q8N386</id>
        <label>LRRC25</label>
    </interactant>
    <organismsDiffer>false</organismsDiffer>
    <experiments>3</experiments>
</comment>
<comment type="interaction">
    <interactant intactId="EBI-11976321">
        <id>O95236-2</id>
    </interactant>
    <interactant intactId="EBI-2858252">
        <id>Q6ZSS7</id>
        <label>MFSD6</label>
    </interactant>
    <organismsDiffer>false</organismsDiffer>
    <experiments>3</experiments>
</comment>
<comment type="interaction">
    <interactant intactId="EBI-11976321">
        <id>O95236-2</id>
    </interactant>
    <interactant intactId="EBI-749635">
        <id>P61601</id>
        <label>NCALD</label>
    </interactant>
    <organismsDiffer>false</organismsDiffer>
    <experiments>3</experiments>
</comment>
<comment type="interaction">
    <interactant intactId="EBI-11976321">
        <id>O95236-2</id>
    </interactant>
    <interactant intactId="EBI-2845982">
        <id>Q01453</id>
        <label>PMP22</label>
    </interactant>
    <organismsDiffer>false</organismsDiffer>
    <experiments>3</experiments>
</comment>
<comment type="interaction">
    <interactant intactId="EBI-11976321">
        <id>O95236-2</id>
    </interactant>
    <interactant intactId="EBI-2466594">
        <id>Q6ZMZ0</id>
        <label>RNF19B</label>
    </interactant>
    <organismsDiffer>false</organismsDiffer>
    <experiments>3</experiments>
</comment>
<comment type="interaction">
    <interactant intactId="EBI-11976321">
        <id>O95236-2</id>
    </interactant>
    <interactant intactId="EBI-5663627">
        <id>Q16585</id>
        <label>SGCB</label>
    </interactant>
    <organismsDiffer>false</organismsDiffer>
    <experiments>3</experiments>
</comment>
<comment type="interaction">
    <interactant intactId="EBI-11976321">
        <id>O95236-2</id>
    </interactant>
    <interactant intactId="EBI-356576">
        <id>Q15758</id>
        <label>SLC1A5</label>
    </interactant>
    <organismsDiffer>false</organismsDiffer>
    <experiments>3</experiments>
</comment>
<comment type="interaction">
    <interactant intactId="EBI-11976321">
        <id>O95236-2</id>
    </interactant>
    <interactant intactId="EBI-5235586">
        <id>Q8TBB6</id>
        <label>SLC7A14</label>
    </interactant>
    <organismsDiffer>false</organismsDiffer>
    <experiments>3</experiments>
</comment>
<comment type="interaction">
    <interactant intactId="EBI-11976321">
        <id>O95236-2</id>
    </interactant>
    <interactant intactId="EBI-712466">
        <id>Q16623</id>
        <label>STX1A</label>
    </interactant>
    <organismsDiffer>false</organismsDiffer>
    <experiments>3</experiments>
</comment>
<comment type="interaction">
    <interactant intactId="EBI-11976321">
        <id>O95236-2</id>
    </interactant>
    <interactant intactId="EBI-6268651">
        <id>Q9NPL8</id>
        <label>TIMMDC1</label>
    </interactant>
    <organismsDiffer>false</organismsDiffer>
    <experiments>3</experiments>
</comment>
<comment type="interaction">
    <interactant intactId="EBI-11976321">
        <id>O95236-2</id>
    </interactant>
    <interactant intactId="EBI-17684533">
        <id>Q9NRX6</id>
        <label>TMEM167B</label>
    </interactant>
    <organismsDiffer>false</organismsDiffer>
    <experiments>3</experiments>
</comment>
<comment type="interaction">
    <interactant intactId="EBI-11976321">
        <id>O95236-2</id>
    </interactant>
    <interactant intactId="EBI-10982110">
        <id>Q96Q45-2</id>
        <label>TMEM237</label>
    </interactant>
    <organismsDiffer>false</organismsDiffer>
    <experiments>3</experiments>
</comment>
<comment type="interaction">
    <interactant intactId="EBI-11976321">
        <id>O95236-2</id>
    </interactant>
    <interactant intactId="EBI-18178701">
        <id>Q4KMG9</id>
        <label>TMEM52B</label>
    </interactant>
    <organismsDiffer>false</organismsDiffer>
    <experiments>3</experiments>
</comment>
<comment type="interaction">
    <interactant intactId="EBI-11976321">
        <id>O95236-2</id>
    </interactant>
    <interactant intactId="EBI-1044859">
        <id>Q9UBN6</id>
        <label>TNFRSF10D</label>
    </interactant>
    <organismsDiffer>false</organismsDiffer>
    <experiments>3</experiments>
</comment>
<comment type="subcellular location">
    <subcellularLocation>
        <location evidence="7">Cytoplasm</location>
    </subcellularLocation>
</comment>
<comment type="alternative products">
    <event type="alternative splicing"/>
    <isoform>
        <id>O95236-1</id>
        <name>1</name>
        <sequence type="displayed"/>
    </isoform>
    <isoform>
        <id>O95236-2</id>
        <name>2</name>
        <sequence type="described" ref="VSP_000293"/>
    </isoform>
    <isoform>
        <id>O95236-3</id>
        <name>3</name>
        <sequence type="described" ref="VSP_000294"/>
    </isoform>
</comment>
<comment type="tissue specificity">
    <text>Widely expressed; the highest levels are in prostate, lung and placenta; also detected in kidney, bone marrow, spleen, thymus, spinal cord, adrenal gland, salivary gland, trachea and mammary gland; levels are low in brain, heart, fetal liver, pancreas and testis.</text>
</comment>
<comment type="induction">
    <text>In vitro, is responsive to TNF.</text>
</comment>
<comment type="similarity">
    <text evidence="7">Belongs to the apolipoprotein L family.</text>
</comment>
<proteinExistence type="evidence at protein level"/>
<name>APOL3_HUMAN</name>
<keyword id="KW-0025">Alternative splicing</keyword>
<keyword id="KW-0963">Cytoplasm</keyword>
<keyword id="KW-0445">Lipid transport</keyword>
<keyword id="KW-1267">Proteomics identification</keyword>
<keyword id="KW-1185">Reference proteome</keyword>
<keyword id="KW-0813">Transport</keyword>
<dbReference type="EMBL" id="AF070675">
    <property type="protein sequence ID" value="AAC83233.1"/>
    <property type="molecule type" value="mRNA"/>
</dbReference>
<dbReference type="EMBL" id="AF324238">
    <property type="protein sequence ID" value="AAK26528.1"/>
    <property type="molecule type" value="Genomic_DNA"/>
</dbReference>
<dbReference type="EMBL" id="AF324233">
    <property type="protein sequence ID" value="AAK26528.1"/>
    <property type="status" value="JOINED"/>
    <property type="molecule type" value="Genomic_DNA"/>
</dbReference>
<dbReference type="EMBL" id="AF324237">
    <property type="protein sequence ID" value="AAK26528.1"/>
    <property type="status" value="JOINED"/>
    <property type="molecule type" value="Genomic_DNA"/>
</dbReference>
<dbReference type="EMBL" id="AY014904">
    <property type="protein sequence ID" value="AAG50346.1"/>
    <property type="molecule type" value="mRNA"/>
</dbReference>
<dbReference type="EMBL" id="AF324238">
    <property type="protein sequence ID" value="AAK26529.1"/>
    <property type="molecule type" value="Genomic_DNA"/>
</dbReference>
<dbReference type="EMBL" id="AF324236">
    <property type="protein sequence ID" value="AAK26529.1"/>
    <property type="status" value="JOINED"/>
    <property type="molecule type" value="Genomic_DNA"/>
</dbReference>
<dbReference type="EMBL" id="AF324237">
    <property type="protein sequence ID" value="AAK26529.1"/>
    <property type="status" value="JOINED"/>
    <property type="molecule type" value="Genomic_DNA"/>
</dbReference>
<dbReference type="EMBL" id="AY014902">
    <property type="protein sequence ID" value="AAG50344.1"/>
    <property type="molecule type" value="mRNA"/>
</dbReference>
<dbReference type="EMBL" id="AY014903">
    <property type="protein sequence ID" value="AAG50345.1"/>
    <property type="molecule type" value="mRNA"/>
</dbReference>
<dbReference type="EMBL" id="AY014905">
    <property type="protein sequence ID" value="AAG50347.1"/>
    <property type="molecule type" value="mRNA"/>
</dbReference>
<dbReference type="EMBL" id="AF324238">
    <property type="protein sequence ID" value="AAK26527.1"/>
    <property type="molecule type" value="Genomic_DNA"/>
</dbReference>
<dbReference type="EMBL" id="AY014906">
    <property type="protein sequence ID" value="AAG50348.1"/>
    <property type="molecule type" value="mRNA"/>
</dbReference>
<dbReference type="EMBL" id="AY014907">
    <property type="protein sequence ID" value="AAG50349.1"/>
    <property type="molecule type" value="mRNA"/>
</dbReference>
<dbReference type="EMBL" id="AF305227">
    <property type="protein sequence ID" value="AAK20213.1"/>
    <property type="molecule type" value="mRNA"/>
</dbReference>
<dbReference type="EMBL" id="CR456379">
    <property type="protein sequence ID" value="CAG30265.1"/>
    <property type="molecule type" value="mRNA"/>
</dbReference>
<dbReference type="EMBL" id="Z95114">
    <property type="status" value="NOT_ANNOTATED_CDS"/>
    <property type="molecule type" value="Genomic_DNA"/>
</dbReference>
<dbReference type="EMBL" id="CH471095">
    <property type="protein sequence ID" value="EAW60080.1"/>
    <property type="molecule type" value="Genomic_DNA"/>
</dbReference>
<dbReference type="EMBL" id="BC042918">
    <property type="protein sequence ID" value="AAH42918.1"/>
    <property type="molecule type" value="mRNA"/>
</dbReference>
<dbReference type="EMBL" id="BC050596">
    <property type="protein sequence ID" value="AAH50596.1"/>
    <property type="molecule type" value="mRNA"/>
</dbReference>
<dbReference type="CCDS" id="CCDS13922.1">
    <molecule id="O95236-1"/>
</dbReference>
<dbReference type="CCDS" id="CCDS13923.1">
    <molecule id="O95236-2"/>
</dbReference>
<dbReference type="CCDS" id="CCDS13924.1">
    <molecule id="O95236-3"/>
</dbReference>
<dbReference type="RefSeq" id="NP_001380522.1">
    <molecule id="O95236-2"/>
    <property type="nucleotide sequence ID" value="NM_001393593.1"/>
</dbReference>
<dbReference type="RefSeq" id="NP_001380524.1">
    <molecule id="O95236-2"/>
    <property type="nucleotide sequence ID" value="NM_001393595.1"/>
</dbReference>
<dbReference type="RefSeq" id="NP_001380525.1">
    <molecule id="O95236-2"/>
    <property type="nucleotide sequence ID" value="NM_001393596.1"/>
</dbReference>
<dbReference type="RefSeq" id="NP_001380526.1">
    <molecule id="O95236-2"/>
    <property type="nucleotide sequence ID" value="NM_001393597.1"/>
</dbReference>
<dbReference type="RefSeq" id="NP_001380527.1">
    <molecule id="O95236-2"/>
    <property type="nucleotide sequence ID" value="NM_001393598.1"/>
</dbReference>
<dbReference type="RefSeq" id="NP_001380528.1">
    <molecule id="O95236-2"/>
    <property type="nucleotide sequence ID" value="NM_001393599.1"/>
</dbReference>
<dbReference type="RefSeq" id="NP_001380529.1">
    <molecule id="O95236-2"/>
    <property type="nucleotide sequence ID" value="NM_001393600.1"/>
</dbReference>
<dbReference type="RefSeq" id="NP_001380530.1">
    <molecule id="O95236-2"/>
    <property type="nucleotide sequence ID" value="NM_001393601.1"/>
</dbReference>
<dbReference type="RefSeq" id="NP_001380531.1">
    <molecule id="O95236-2"/>
    <property type="nucleotide sequence ID" value="NM_001393602.1"/>
</dbReference>
<dbReference type="RefSeq" id="NP_001380532.1">
    <molecule id="O95236-2"/>
    <property type="nucleotide sequence ID" value="NM_001393603.1"/>
</dbReference>
<dbReference type="RefSeq" id="NP_001380533.1">
    <molecule id="O95236-2"/>
    <property type="nucleotide sequence ID" value="NM_001393604.1"/>
</dbReference>
<dbReference type="RefSeq" id="NP_001380535.1">
    <molecule id="O95236-3"/>
    <property type="nucleotide sequence ID" value="NM_001393606.1"/>
</dbReference>
<dbReference type="RefSeq" id="NP_001380536.1">
    <molecule id="O95236-3"/>
    <property type="nucleotide sequence ID" value="NM_001393607.1"/>
</dbReference>
<dbReference type="RefSeq" id="NP_001380537.1">
    <molecule id="O95236-3"/>
    <property type="nucleotide sequence ID" value="NM_001393608.1"/>
</dbReference>
<dbReference type="RefSeq" id="NP_001380538.1">
    <molecule id="O95236-3"/>
    <property type="nucleotide sequence ID" value="NM_001393609.1"/>
</dbReference>
<dbReference type="RefSeq" id="NP_055164.1">
    <molecule id="O95236-2"/>
    <property type="nucleotide sequence ID" value="NM_014349.3"/>
</dbReference>
<dbReference type="RefSeq" id="NP_085147.1">
    <molecule id="O95236-2"/>
    <property type="nucleotide sequence ID" value="NM_030644.2"/>
</dbReference>
<dbReference type="RefSeq" id="NP_663614.1">
    <molecule id="O95236-2"/>
    <property type="nucleotide sequence ID" value="NM_145639.2"/>
</dbReference>
<dbReference type="RefSeq" id="NP_663615.1">
    <molecule id="O95236-1"/>
    <property type="nucleotide sequence ID" value="NM_145640.2"/>
</dbReference>
<dbReference type="RefSeq" id="NP_663616.1">
    <molecule id="O95236-3"/>
    <property type="nucleotide sequence ID" value="NM_145641.3"/>
</dbReference>
<dbReference type="RefSeq" id="NP_663617.1">
    <molecule id="O95236-3"/>
    <property type="nucleotide sequence ID" value="NM_145642.3"/>
</dbReference>
<dbReference type="RefSeq" id="XP_006724387.1">
    <property type="nucleotide sequence ID" value="XM_006724324.1"/>
</dbReference>
<dbReference type="RefSeq" id="XP_006724388.1">
    <property type="nucleotide sequence ID" value="XM_006724325.2"/>
</dbReference>
<dbReference type="RefSeq" id="XP_016884441.1">
    <property type="nucleotide sequence ID" value="XM_017028952.1"/>
</dbReference>
<dbReference type="RefSeq" id="XP_047297464.1">
    <molecule id="O95236-2"/>
    <property type="nucleotide sequence ID" value="XM_047441508.1"/>
</dbReference>
<dbReference type="RefSeq" id="XP_054181926.1">
    <molecule id="O95236-2"/>
    <property type="nucleotide sequence ID" value="XM_054325951.1"/>
</dbReference>
<dbReference type="SMR" id="O95236"/>
<dbReference type="BioGRID" id="123326">
    <property type="interactions" value="37"/>
</dbReference>
<dbReference type="FunCoup" id="O95236">
    <property type="interactions" value="124"/>
</dbReference>
<dbReference type="IntAct" id="O95236">
    <property type="interactions" value="30"/>
</dbReference>
<dbReference type="STRING" id="9606.ENSP00000344577"/>
<dbReference type="GlyCosmos" id="O95236">
    <property type="glycosylation" value="1 site, 1 glycan"/>
</dbReference>
<dbReference type="GlyGen" id="O95236">
    <property type="glycosylation" value="1 site, 1 O-linked glycan (1 site)"/>
</dbReference>
<dbReference type="iPTMnet" id="O95236"/>
<dbReference type="PhosphoSitePlus" id="O95236"/>
<dbReference type="BioMuta" id="APOL3"/>
<dbReference type="jPOST" id="O95236"/>
<dbReference type="MassIVE" id="O95236"/>
<dbReference type="PaxDb" id="9606-ENSP00000344577"/>
<dbReference type="PeptideAtlas" id="O95236"/>
<dbReference type="ProteomicsDB" id="50733">
    <molecule id="O95236-1"/>
</dbReference>
<dbReference type="ProteomicsDB" id="50734">
    <molecule id="O95236-2"/>
</dbReference>
<dbReference type="ProteomicsDB" id="50735">
    <molecule id="O95236-3"/>
</dbReference>
<dbReference type="Antibodypedia" id="25500">
    <property type="antibodies" value="188 antibodies from 31 providers"/>
</dbReference>
<dbReference type="DNASU" id="80833"/>
<dbReference type="Ensembl" id="ENST00000349314.7">
    <molecule id="O95236-1"/>
    <property type="protein sequence ID" value="ENSP00000344577.2"/>
    <property type="gene ID" value="ENSG00000128284.21"/>
</dbReference>
<dbReference type="Ensembl" id="ENST00000361710.6">
    <molecule id="O95236-3"/>
    <property type="protein sequence ID" value="ENSP00000355164.2"/>
    <property type="gene ID" value="ENSG00000128284.21"/>
</dbReference>
<dbReference type="Ensembl" id="ENST00000397287.6">
    <molecule id="O95236-3"/>
    <property type="protein sequence ID" value="ENSP00000380456.2"/>
    <property type="gene ID" value="ENSG00000128284.21"/>
</dbReference>
<dbReference type="Ensembl" id="ENST00000424878.4">
    <molecule id="O95236-2"/>
    <property type="protein sequence ID" value="ENSP00000415779.3"/>
    <property type="gene ID" value="ENSG00000128284.21"/>
</dbReference>
<dbReference type="GeneID" id="80833"/>
<dbReference type="KEGG" id="hsa:80833"/>
<dbReference type="MANE-Select" id="ENST00000424878.4">
    <molecule id="O95236-2"/>
    <property type="protein sequence ID" value="ENSP00000415779.3"/>
    <property type="RefSeq nucleotide sequence ID" value="NM_145639.2"/>
    <property type="RefSeq protein sequence ID" value="NP_663614.1"/>
</dbReference>
<dbReference type="UCSC" id="uc003aot.4">
    <molecule id="O95236-1"/>
    <property type="organism name" value="human"/>
</dbReference>
<dbReference type="AGR" id="HGNC:14868"/>
<dbReference type="CTD" id="80833"/>
<dbReference type="DisGeNET" id="80833"/>
<dbReference type="GeneCards" id="APOL3"/>
<dbReference type="HGNC" id="HGNC:14868">
    <property type="gene designation" value="APOL3"/>
</dbReference>
<dbReference type="HPA" id="ENSG00000128284">
    <property type="expression patterns" value="Low tissue specificity"/>
</dbReference>
<dbReference type="MIM" id="607253">
    <property type="type" value="gene"/>
</dbReference>
<dbReference type="neXtProt" id="NX_O95236"/>
<dbReference type="OpenTargets" id="ENSG00000128284"/>
<dbReference type="PharmGKB" id="PA24906"/>
<dbReference type="VEuPathDB" id="HostDB:ENSG00000128284"/>
<dbReference type="eggNOG" id="ENOG502RZGU">
    <property type="taxonomic scope" value="Eukaryota"/>
</dbReference>
<dbReference type="GeneTree" id="ENSGT01030000234599"/>
<dbReference type="HOGENOM" id="CLU_046288_2_0_1"/>
<dbReference type="InParanoid" id="O95236"/>
<dbReference type="OMA" id="WTHLEEG"/>
<dbReference type="OrthoDB" id="6363454at2759"/>
<dbReference type="PAN-GO" id="O95236">
    <property type="GO annotations" value="1 GO annotation based on evolutionary models"/>
</dbReference>
<dbReference type="PhylomeDB" id="O95236"/>
<dbReference type="TreeFam" id="TF334681"/>
<dbReference type="PathwayCommons" id="O95236"/>
<dbReference type="SignaLink" id="O95236"/>
<dbReference type="BioGRID-ORCS" id="80833">
    <property type="hits" value="14 hits in 1154 CRISPR screens"/>
</dbReference>
<dbReference type="ChiTaRS" id="APOL3">
    <property type="organism name" value="human"/>
</dbReference>
<dbReference type="GeneWiki" id="APOL3"/>
<dbReference type="GenomeRNAi" id="80833"/>
<dbReference type="Pharos" id="O95236">
    <property type="development level" value="Tbio"/>
</dbReference>
<dbReference type="PRO" id="PR:O95236"/>
<dbReference type="Proteomes" id="UP000005640">
    <property type="component" value="Chromosome 22"/>
</dbReference>
<dbReference type="RNAct" id="O95236">
    <property type="molecule type" value="protein"/>
</dbReference>
<dbReference type="Bgee" id="ENSG00000128284">
    <property type="expression patterns" value="Expressed in granulocyte and 188 other cell types or tissues"/>
</dbReference>
<dbReference type="ExpressionAtlas" id="O95236">
    <property type="expression patterns" value="baseline and differential"/>
</dbReference>
<dbReference type="GO" id="GO:0005737">
    <property type="term" value="C:cytoplasm"/>
    <property type="evidence" value="ECO:0007669"/>
    <property type="project" value="UniProtKB-SubCell"/>
</dbReference>
<dbReference type="GO" id="GO:0005576">
    <property type="term" value="C:extracellular region"/>
    <property type="evidence" value="ECO:0007669"/>
    <property type="project" value="InterPro"/>
</dbReference>
<dbReference type="GO" id="GO:0016020">
    <property type="term" value="C:membrane"/>
    <property type="evidence" value="ECO:0007005"/>
    <property type="project" value="UniProtKB"/>
</dbReference>
<dbReference type="GO" id="GO:0008289">
    <property type="term" value="F:lipid binding"/>
    <property type="evidence" value="ECO:0000318"/>
    <property type="project" value="GO_Central"/>
</dbReference>
<dbReference type="GO" id="GO:0005319">
    <property type="term" value="F:lipid transporter activity"/>
    <property type="evidence" value="ECO:0000304"/>
    <property type="project" value="ProtInc"/>
</dbReference>
<dbReference type="GO" id="GO:0006954">
    <property type="term" value="P:inflammatory response"/>
    <property type="evidence" value="ECO:0000304"/>
    <property type="project" value="ProtInc"/>
</dbReference>
<dbReference type="GO" id="GO:0042157">
    <property type="term" value="P:lipoprotein metabolic process"/>
    <property type="evidence" value="ECO:0007669"/>
    <property type="project" value="InterPro"/>
</dbReference>
<dbReference type="GO" id="GO:0043123">
    <property type="term" value="P:positive regulation of canonical NF-kappaB signal transduction"/>
    <property type="evidence" value="ECO:0007001"/>
    <property type="project" value="UniProtKB"/>
</dbReference>
<dbReference type="InterPro" id="IPR008405">
    <property type="entry name" value="ApoL"/>
</dbReference>
<dbReference type="PANTHER" id="PTHR14096">
    <property type="entry name" value="APOLIPOPROTEIN L"/>
    <property type="match status" value="1"/>
</dbReference>
<dbReference type="PANTHER" id="PTHR14096:SF40">
    <property type="entry name" value="APOLIPOPROTEIN L3"/>
    <property type="match status" value="1"/>
</dbReference>
<dbReference type="Pfam" id="PF05461">
    <property type="entry name" value="ApoL"/>
    <property type="match status" value="1"/>
</dbReference>
<organism>
    <name type="scientific">Homo sapiens</name>
    <name type="common">Human</name>
    <dbReference type="NCBI Taxonomy" id="9606"/>
    <lineage>
        <taxon>Eukaryota</taxon>
        <taxon>Metazoa</taxon>
        <taxon>Chordata</taxon>
        <taxon>Craniata</taxon>
        <taxon>Vertebrata</taxon>
        <taxon>Euteleostomi</taxon>
        <taxon>Mammalia</taxon>
        <taxon>Eutheria</taxon>
        <taxon>Euarchontoglires</taxon>
        <taxon>Primates</taxon>
        <taxon>Haplorrhini</taxon>
        <taxon>Catarrhini</taxon>
        <taxon>Hominidae</taxon>
        <taxon>Homo</taxon>
    </lineage>
</organism>
<sequence>MGLGQGWGWEASCFACLIRSCCQVVTFTFPFGFQGISQSLENVSGYYADARLEVGSTQLRTAGSCSHSFKRSFLEKKRFTEEATKYFRERVSPVHLQILLTNNEAWKRFVTAAELPRDEADALYEALKKLRTYAAIEDEYVQQKDEQFREWFLKEFPQVKRKIQESIEKLRALANGIEEVHRGCTISNVVSSSTGAASGIMSLAGLVLAPFTAGTSLALTAAGVGLGAASAVTGITTSIVEHSYTSSAEAEASRLTATSIDRLKVFKEVMRDITPNLLSLLNNYYEATQTIGSEIRAIRQARARARLPVTTWRISAGSGGQAERTIAGTTRAVSRGARILSATTSGIFLALDVVNLVYESKHLHEGAKSASAEELRRQAQELEENLMELTQIYQRLNPCHTH</sequence>
<feature type="chain" id="PRO_0000137602" description="Apolipoprotein L3">
    <location>
        <begin position="1"/>
        <end position="402"/>
    </location>
</feature>
<feature type="splice variant" id="VSP_000294" description="In isoform 3." evidence="3">
    <location>
        <begin position="1"/>
        <end position="200"/>
    </location>
</feature>
<feature type="splice variant" id="VSP_000293" description="In isoform 2." evidence="2 3 4 5 6">
    <original>MGLGQGWGWEASCFACLIRSCCQVVTFTFPFGFQGISQSLENVSGYYADARLEVGSTQLRTAGSCSHSFKRSFL</original>
    <variation>MDS</variation>
    <location>
        <begin position="1"/>
        <end position="74"/>
    </location>
</feature>
<feature type="sequence variant" id="VAR_053007" description="In dbSNP:rs132653." evidence="1">
    <original>S</original>
    <variation>R</variation>
    <location>
        <position position="39"/>
    </location>
</feature>
<feature type="sequence variant" id="VAR_047488" description="In dbSNP:rs6000152.">
    <original>A</original>
    <variation>V</variation>
    <location>
        <position position="135"/>
    </location>
</feature>